<evidence type="ECO:0000255" key="1">
    <source>
        <dbReference type="HAMAP-Rule" id="MF_00178"/>
    </source>
</evidence>
<feature type="chain" id="PRO_1000040372" description="6,7-dimethyl-8-ribityllumazine synthase">
    <location>
        <begin position="1"/>
        <end position="168"/>
    </location>
</feature>
<feature type="active site" description="Proton donor" evidence="1">
    <location>
        <position position="97"/>
    </location>
</feature>
<feature type="binding site" evidence="1">
    <location>
        <position position="31"/>
    </location>
    <ligand>
        <name>5-amino-6-(D-ribitylamino)uracil</name>
        <dbReference type="ChEBI" id="CHEBI:15934"/>
    </ligand>
</feature>
<feature type="binding site" evidence="1">
    <location>
        <begin position="65"/>
        <end position="67"/>
    </location>
    <ligand>
        <name>5-amino-6-(D-ribitylamino)uracil</name>
        <dbReference type="ChEBI" id="CHEBI:15934"/>
    </ligand>
</feature>
<feature type="binding site" evidence="1">
    <location>
        <begin position="89"/>
        <end position="91"/>
    </location>
    <ligand>
        <name>5-amino-6-(D-ribitylamino)uracil</name>
        <dbReference type="ChEBI" id="CHEBI:15934"/>
    </ligand>
</feature>
<feature type="binding site" evidence="1">
    <location>
        <begin position="94"/>
        <end position="95"/>
    </location>
    <ligand>
        <name>(2S)-2-hydroxy-3-oxobutyl phosphate</name>
        <dbReference type="ChEBI" id="CHEBI:58830"/>
    </ligand>
</feature>
<feature type="binding site" evidence="1">
    <location>
        <position position="122"/>
    </location>
    <ligand>
        <name>5-amino-6-(D-ribitylamino)uracil</name>
        <dbReference type="ChEBI" id="CHEBI:15934"/>
    </ligand>
</feature>
<feature type="binding site" evidence="1">
    <location>
        <position position="136"/>
    </location>
    <ligand>
        <name>(2S)-2-hydroxy-3-oxobutyl phosphate</name>
        <dbReference type="ChEBI" id="CHEBI:58830"/>
    </ligand>
</feature>
<reference key="1">
    <citation type="journal article" date="2007" name="PLoS Biol.">
        <title>Evolution of symbiotic bacteria in the distal human intestine.</title>
        <authorList>
            <person name="Xu J."/>
            <person name="Mahowald M.A."/>
            <person name="Ley R.E."/>
            <person name="Lozupone C.A."/>
            <person name="Hamady M."/>
            <person name="Martens E.C."/>
            <person name="Henrissat B."/>
            <person name="Coutinho P.M."/>
            <person name="Minx P."/>
            <person name="Latreille P."/>
            <person name="Cordum H."/>
            <person name="Van Brunt A."/>
            <person name="Kim K."/>
            <person name="Fulton R.S."/>
            <person name="Fulton L.A."/>
            <person name="Clifton S.W."/>
            <person name="Wilson R.K."/>
            <person name="Knight R.D."/>
            <person name="Gordon J.I."/>
        </authorList>
    </citation>
    <scope>NUCLEOTIDE SEQUENCE [LARGE SCALE GENOMIC DNA]</scope>
    <source>
        <strain>ATCC 8482 / DSM 1447 / JCM 5826 / CCUG 4940 / NBRC 14291 / NCTC 11154</strain>
    </source>
</reference>
<protein>
    <recommendedName>
        <fullName evidence="1">6,7-dimethyl-8-ribityllumazine synthase</fullName>
        <shortName evidence="1">DMRL synthase</shortName>
        <shortName evidence="1">LS</shortName>
        <shortName evidence="1">Lumazine synthase</shortName>
        <ecNumber evidence="1">2.5.1.78</ecNumber>
    </recommendedName>
</protein>
<name>RISB_PHOV8</name>
<keyword id="KW-0686">Riboflavin biosynthesis</keyword>
<keyword id="KW-0808">Transferase</keyword>
<organism>
    <name type="scientific">Phocaeicola vulgatus (strain ATCC 8482 / DSM 1447 / JCM 5826 / CCUG 4940 / NBRC 14291 / NCTC 11154)</name>
    <name type="common">Bacteroides vulgatus</name>
    <dbReference type="NCBI Taxonomy" id="435590"/>
    <lineage>
        <taxon>Bacteria</taxon>
        <taxon>Pseudomonadati</taxon>
        <taxon>Bacteroidota</taxon>
        <taxon>Bacteroidia</taxon>
        <taxon>Bacteroidales</taxon>
        <taxon>Bacteroidaceae</taxon>
        <taxon>Phocaeicola</taxon>
    </lineage>
</organism>
<dbReference type="EC" id="2.5.1.78" evidence="1"/>
<dbReference type="EMBL" id="CP000139">
    <property type="protein sequence ID" value="ABR40271.1"/>
    <property type="molecule type" value="Genomic_DNA"/>
</dbReference>
<dbReference type="RefSeq" id="WP_005848165.1">
    <property type="nucleotide sequence ID" value="NZ_JANSWM010000107.1"/>
</dbReference>
<dbReference type="SMR" id="A6L3K7"/>
<dbReference type="STRING" id="435590.BVU_2618"/>
<dbReference type="PaxDb" id="435590-BVU_2618"/>
<dbReference type="GeneID" id="5303581"/>
<dbReference type="KEGG" id="bvu:BVU_2618"/>
<dbReference type="eggNOG" id="COG0054">
    <property type="taxonomic scope" value="Bacteria"/>
</dbReference>
<dbReference type="HOGENOM" id="CLU_089358_1_2_10"/>
<dbReference type="BioCyc" id="BVUL435590:G1G59-2722-MONOMER"/>
<dbReference type="UniPathway" id="UPA00275">
    <property type="reaction ID" value="UER00404"/>
</dbReference>
<dbReference type="Proteomes" id="UP000002861">
    <property type="component" value="Chromosome"/>
</dbReference>
<dbReference type="GO" id="GO:0005829">
    <property type="term" value="C:cytosol"/>
    <property type="evidence" value="ECO:0007669"/>
    <property type="project" value="TreeGrafter"/>
</dbReference>
<dbReference type="GO" id="GO:0009349">
    <property type="term" value="C:riboflavin synthase complex"/>
    <property type="evidence" value="ECO:0007669"/>
    <property type="project" value="InterPro"/>
</dbReference>
<dbReference type="GO" id="GO:0000906">
    <property type="term" value="F:6,7-dimethyl-8-ribityllumazine synthase activity"/>
    <property type="evidence" value="ECO:0007669"/>
    <property type="project" value="UniProtKB-UniRule"/>
</dbReference>
<dbReference type="GO" id="GO:0009231">
    <property type="term" value="P:riboflavin biosynthetic process"/>
    <property type="evidence" value="ECO:0007669"/>
    <property type="project" value="UniProtKB-UniRule"/>
</dbReference>
<dbReference type="CDD" id="cd09209">
    <property type="entry name" value="Lumazine_synthase-I"/>
    <property type="match status" value="1"/>
</dbReference>
<dbReference type="Gene3D" id="3.40.50.960">
    <property type="entry name" value="Lumazine/riboflavin synthase"/>
    <property type="match status" value="1"/>
</dbReference>
<dbReference type="HAMAP" id="MF_00178">
    <property type="entry name" value="Lumazine_synth"/>
    <property type="match status" value="1"/>
</dbReference>
<dbReference type="InterPro" id="IPR034964">
    <property type="entry name" value="LS"/>
</dbReference>
<dbReference type="InterPro" id="IPR002180">
    <property type="entry name" value="LS/RS"/>
</dbReference>
<dbReference type="InterPro" id="IPR036467">
    <property type="entry name" value="LS/RS_sf"/>
</dbReference>
<dbReference type="NCBIfam" id="TIGR00114">
    <property type="entry name" value="lumazine-synth"/>
    <property type="match status" value="1"/>
</dbReference>
<dbReference type="PANTHER" id="PTHR21058:SF0">
    <property type="entry name" value="6,7-DIMETHYL-8-RIBITYLLUMAZINE SYNTHASE"/>
    <property type="match status" value="1"/>
</dbReference>
<dbReference type="PANTHER" id="PTHR21058">
    <property type="entry name" value="6,7-DIMETHYL-8-RIBITYLLUMAZINE SYNTHASE DMRL SYNTHASE LUMAZINE SYNTHASE"/>
    <property type="match status" value="1"/>
</dbReference>
<dbReference type="Pfam" id="PF00885">
    <property type="entry name" value="DMRL_synthase"/>
    <property type="match status" value="1"/>
</dbReference>
<dbReference type="SUPFAM" id="SSF52121">
    <property type="entry name" value="Lumazine synthase"/>
    <property type="match status" value="1"/>
</dbReference>
<gene>
    <name evidence="1" type="primary">ribH</name>
    <name type="ordered locus">BVU_2618</name>
</gene>
<proteinExistence type="inferred from homology"/>
<accession>A6L3K7</accession>
<sequence length="168" mass="18128">MATAYHNLSDYDFNSVPNAENMRFGIVVSEWNNNITGPLLEGAISTLKKHGAKDKNILVQTVPGSFELTFGSAQMIKSGKVDAVIAIGCVVRGDTPHFDYVCAGTTQGIAQLNAEGDIPVIYGLITTNTMQQAEDRAGGRLGNKGDECAITAIKMLDFKEKLQKTQIF</sequence>
<comment type="function">
    <text evidence="1">Catalyzes the formation of 6,7-dimethyl-8-ribityllumazine by condensation of 5-amino-6-(D-ribitylamino)uracil with 3,4-dihydroxy-2-butanone 4-phosphate. This is the penultimate step in the biosynthesis of riboflavin.</text>
</comment>
<comment type="catalytic activity">
    <reaction evidence="1">
        <text>(2S)-2-hydroxy-3-oxobutyl phosphate + 5-amino-6-(D-ribitylamino)uracil = 6,7-dimethyl-8-(1-D-ribityl)lumazine + phosphate + 2 H2O + H(+)</text>
        <dbReference type="Rhea" id="RHEA:26152"/>
        <dbReference type="ChEBI" id="CHEBI:15377"/>
        <dbReference type="ChEBI" id="CHEBI:15378"/>
        <dbReference type="ChEBI" id="CHEBI:15934"/>
        <dbReference type="ChEBI" id="CHEBI:43474"/>
        <dbReference type="ChEBI" id="CHEBI:58201"/>
        <dbReference type="ChEBI" id="CHEBI:58830"/>
        <dbReference type="EC" id="2.5.1.78"/>
    </reaction>
</comment>
<comment type="pathway">
    <text evidence="1">Cofactor biosynthesis; riboflavin biosynthesis; riboflavin from 2-hydroxy-3-oxobutyl phosphate and 5-amino-6-(D-ribitylamino)uracil: step 1/2.</text>
</comment>
<comment type="similarity">
    <text evidence="1">Belongs to the DMRL synthase family.</text>
</comment>